<feature type="chain" id="PRO_0000230687" description="Small ribosomal subunit protein uS3">
    <location>
        <begin position="1"/>
        <end position="222"/>
    </location>
</feature>
<feature type="domain" description="KH type-2" evidence="1">
    <location>
        <begin position="39"/>
        <end position="107"/>
    </location>
</feature>
<sequence length="222" mass="24865">MGQKVHPKGLRIGIIKDWDAKWFADKKHYQELLHEDLKIRKYIKTKFYQAGISRIVIERASNRVKVTIHTARPGMVIGKGGTEIEVLRKELEKMTGKQININIAEIKVPEIDAQLVAENIAAQIEKRISYKRAMKQAVSRALKMGAQGIKVACSGRLAGAEIARSEWYSEGKVPLTTLRADIDYGFAEALTTYGKIGVKVWIYKGEVLPEVKKESVSTEGGE</sequence>
<gene>
    <name evidence="1" type="primary">rpsC</name>
    <name type="ordered locus">CHY_2303</name>
</gene>
<evidence type="ECO:0000255" key="1">
    <source>
        <dbReference type="HAMAP-Rule" id="MF_01309"/>
    </source>
</evidence>
<evidence type="ECO:0000305" key="2"/>
<organism>
    <name type="scientific">Carboxydothermus hydrogenoformans (strain ATCC BAA-161 / DSM 6008 / Z-2901)</name>
    <dbReference type="NCBI Taxonomy" id="246194"/>
    <lineage>
        <taxon>Bacteria</taxon>
        <taxon>Bacillati</taxon>
        <taxon>Bacillota</taxon>
        <taxon>Clostridia</taxon>
        <taxon>Thermoanaerobacterales</taxon>
        <taxon>Thermoanaerobacteraceae</taxon>
        <taxon>Carboxydothermus</taxon>
    </lineage>
</organism>
<proteinExistence type="inferred from homology"/>
<reference key="1">
    <citation type="journal article" date="2005" name="PLoS Genet.">
        <title>Life in hot carbon monoxide: the complete genome sequence of Carboxydothermus hydrogenoformans Z-2901.</title>
        <authorList>
            <person name="Wu M."/>
            <person name="Ren Q."/>
            <person name="Durkin A.S."/>
            <person name="Daugherty S.C."/>
            <person name="Brinkac L.M."/>
            <person name="Dodson R.J."/>
            <person name="Madupu R."/>
            <person name="Sullivan S.A."/>
            <person name="Kolonay J.F."/>
            <person name="Nelson W.C."/>
            <person name="Tallon L.J."/>
            <person name="Jones K.M."/>
            <person name="Ulrich L.E."/>
            <person name="Gonzalez J.M."/>
            <person name="Zhulin I.B."/>
            <person name="Robb F.T."/>
            <person name="Eisen J.A."/>
        </authorList>
    </citation>
    <scope>NUCLEOTIDE SEQUENCE [LARGE SCALE GENOMIC DNA]</scope>
    <source>
        <strain>ATCC BAA-161 / DSM 6008 / Z-2901</strain>
    </source>
</reference>
<comment type="function">
    <text evidence="1">Binds the lower part of the 30S subunit head. Binds mRNA in the 70S ribosome, positioning it for translation.</text>
</comment>
<comment type="subunit">
    <text evidence="1">Part of the 30S ribosomal subunit. Forms a tight complex with proteins S10 and S14.</text>
</comment>
<comment type="similarity">
    <text evidence="1">Belongs to the universal ribosomal protein uS3 family.</text>
</comment>
<protein>
    <recommendedName>
        <fullName evidence="1">Small ribosomal subunit protein uS3</fullName>
    </recommendedName>
    <alternativeName>
        <fullName evidence="2">30S ribosomal protein S3</fullName>
    </alternativeName>
</protein>
<name>RS3_CARHZ</name>
<accession>Q3A9S2</accession>
<keyword id="KW-1185">Reference proteome</keyword>
<keyword id="KW-0687">Ribonucleoprotein</keyword>
<keyword id="KW-0689">Ribosomal protein</keyword>
<keyword id="KW-0694">RNA-binding</keyword>
<keyword id="KW-0699">rRNA-binding</keyword>
<dbReference type="EMBL" id="CP000141">
    <property type="protein sequence ID" value="ABB15926.1"/>
    <property type="molecule type" value="Genomic_DNA"/>
</dbReference>
<dbReference type="RefSeq" id="WP_011345185.1">
    <property type="nucleotide sequence ID" value="NC_007503.1"/>
</dbReference>
<dbReference type="SMR" id="Q3A9S2"/>
<dbReference type="FunCoup" id="Q3A9S2">
    <property type="interactions" value="502"/>
</dbReference>
<dbReference type="STRING" id="246194.CHY_2303"/>
<dbReference type="KEGG" id="chy:CHY_2303"/>
<dbReference type="eggNOG" id="COG0092">
    <property type="taxonomic scope" value="Bacteria"/>
</dbReference>
<dbReference type="HOGENOM" id="CLU_058591_0_2_9"/>
<dbReference type="InParanoid" id="Q3A9S2"/>
<dbReference type="OrthoDB" id="9806396at2"/>
<dbReference type="Proteomes" id="UP000002706">
    <property type="component" value="Chromosome"/>
</dbReference>
<dbReference type="GO" id="GO:0022627">
    <property type="term" value="C:cytosolic small ribosomal subunit"/>
    <property type="evidence" value="ECO:0007669"/>
    <property type="project" value="TreeGrafter"/>
</dbReference>
<dbReference type="GO" id="GO:0003729">
    <property type="term" value="F:mRNA binding"/>
    <property type="evidence" value="ECO:0007669"/>
    <property type="project" value="UniProtKB-UniRule"/>
</dbReference>
<dbReference type="GO" id="GO:0019843">
    <property type="term" value="F:rRNA binding"/>
    <property type="evidence" value="ECO:0007669"/>
    <property type="project" value="UniProtKB-UniRule"/>
</dbReference>
<dbReference type="GO" id="GO:0003735">
    <property type="term" value="F:structural constituent of ribosome"/>
    <property type="evidence" value="ECO:0007669"/>
    <property type="project" value="InterPro"/>
</dbReference>
<dbReference type="GO" id="GO:0006412">
    <property type="term" value="P:translation"/>
    <property type="evidence" value="ECO:0007669"/>
    <property type="project" value="UniProtKB-UniRule"/>
</dbReference>
<dbReference type="CDD" id="cd02412">
    <property type="entry name" value="KH-II_30S_S3"/>
    <property type="match status" value="1"/>
</dbReference>
<dbReference type="FunFam" id="3.30.1140.32:FF:000002">
    <property type="entry name" value="30S ribosomal protein S3"/>
    <property type="match status" value="1"/>
</dbReference>
<dbReference type="FunFam" id="3.30.300.20:FF:000001">
    <property type="entry name" value="30S ribosomal protein S3"/>
    <property type="match status" value="1"/>
</dbReference>
<dbReference type="Gene3D" id="3.30.300.20">
    <property type="match status" value="1"/>
</dbReference>
<dbReference type="Gene3D" id="3.30.1140.32">
    <property type="entry name" value="Ribosomal protein S3, C-terminal domain"/>
    <property type="match status" value="1"/>
</dbReference>
<dbReference type="HAMAP" id="MF_01309_B">
    <property type="entry name" value="Ribosomal_uS3_B"/>
    <property type="match status" value="1"/>
</dbReference>
<dbReference type="InterPro" id="IPR004087">
    <property type="entry name" value="KH_dom"/>
</dbReference>
<dbReference type="InterPro" id="IPR015946">
    <property type="entry name" value="KH_dom-like_a/b"/>
</dbReference>
<dbReference type="InterPro" id="IPR004044">
    <property type="entry name" value="KH_dom_type_2"/>
</dbReference>
<dbReference type="InterPro" id="IPR009019">
    <property type="entry name" value="KH_sf_prok-type"/>
</dbReference>
<dbReference type="InterPro" id="IPR036419">
    <property type="entry name" value="Ribosomal_S3_C_sf"/>
</dbReference>
<dbReference type="InterPro" id="IPR005704">
    <property type="entry name" value="Ribosomal_uS3_bac-typ"/>
</dbReference>
<dbReference type="InterPro" id="IPR001351">
    <property type="entry name" value="Ribosomal_uS3_C"/>
</dbReference>
<dbReference type="NCBIfam" id="TIGR01009">
    <property type="entry name" value="rpsC_bact"/>
    <property type="match status" value="1"/>
</dbReference>
<dbReference type="PANTHER" id="PTHR11760">
    <property type="entry name" value="30S/40S RIBOSOMAL PROTEIN S3"/>
    <property type="match status" value="1"/>
</dbReference>
<dbReference type="PANTHER" id="PTHR11760:SF19">
    <property type="entry name" value="SMALL RIBOSOMAL SUBUNIT PROTEIN US3C"/>
    <property type="match status" value="1"/>
</dbReference>
<dbReference type="Pfam" id="PF07650">
    <property type="entry name" value="KH_2"/>
    <property type="match status" value="1"/>
</dbReference>
<dbReference type="Pfam" id="PF00189">
    <property type="entry name" value="Ribosomal_S3_C"/>
    <property type="match status" value="1"/>
</dbReference>
<dbReference type="SMART" id="SM00322">
    <property type="entry name" value="KH"/>
    <property type="match status" value="1"/>
</dbReference>
<dbReference type="SUPFAM" id="SSF54814">
    <property type="entry name" value="Prokaryotic type KH domain (KH-domain type II)"/>
    <property type="match status" value="1"/>
</dbReference>
<dbReference type="SUPFAM" id="SSF54821">
    <property type="entry name" value="Ribosomal protein S3 C-terminal domain"/>
    <property type="match status" value="1"/>
</dbReference>
<dbReference type="PROSITE" id="PS50823">
    <property type="entry name" value="KH_TYPE_2"/>
    <property type="match status" value="1"/>
</dbReference>